<feature type="chain" id="PRO_0000389821" description="Acetyl-coenzyme A carboxylase carboxyl transferase subunit beta">
    <location>
        <begin position="1"/>
        <end position="317"/>
    </location>
</feature>
<feature type="domain" description="CoA carboxyltransferase N-terminal" evidence="2">
    <location>
        <begin position="55"/>
        <end position="317"/>
    </location>
</feature>
<feature type="zinc finger region" description="C4-type" evidence="1">
    <location>
        <begin position="59"/>
        <end position="81"/>
    </location>
</feature>
<feature type="region of interest" description="Disordered" evidence="3">
    <location>
        <begin position="1"/>
        <end position="28"/>
    </location>
</feature>
<feature type="binding site" evidence="1">
    <location>
        <position position="59"/>
    </location>
    <ligand>
        <name>Zn(2+)</name>
        <dbReference type="ChEBI" id="CHEBI:29105"/>
    </ligand>
</feature>
<feature type="binding site" evidence="1">
    <location>
        <position position="62"/>
    </location>
    <ligand>
        <name>Zn(2+)</name>
        <dbReference type="ChEBI" id="CHEBI:29105"/>
    </ligand>
</feature>
<feature type="binding site" evidence="1">
    <location>
        <position position="78"/>
    </location>
    <ligand>
        <name>Zn(2+)</name>
        <dbReference type="ChEBI" id="CHEBI:29105"/>
    </ligand>
</feature>
<feature type="binding site" evidence="1">
    <location>
        <position position="81"/>
    </location>
    <ligand>
        <name>Zn(2+)</name>
        <dbReference type="ChEBI" id="CHEBI:29105"/>
    </ligand>
</feature>
<organism>
    <name type="scientific">Psychrobacter arcticus (strain DSM 17307 / VKM B-2377 / 273-4)</name>
    <dbReference type="NCBI Taxonomy" id="259536"/>
    <lineage>
        <taxon>Bacteria</taxon>
        <taxon>Pseudomonadati</taxon>
        <taxon>Pseudomonadota</taxon>
        <taxon>Gammaproteobacteria</taxon>
        <taxon>Moraxellales</taxon>
        <taxon>Moraxellaceae</taxon>
        <taxon>Psychrobacter</taxon>
    </lineage>
</organism>
<protein>
    <recommendedName>
        <fullName evidence="1">Acetyl-coenzyme A carboxylase carboxyl transferase subunit beta</fullName>
        <shortName evidence="1">ACCase subunit beta</shortName>
        <shortName evidence="1">Acetyl-CoA carboxylase carboxyltransferase subunit beta</shortName>
        <ecNumber evidence="1">2.1.3.15</ecNumber>
    </recommendedName>
</protein>
<keyword id="KW-0067">ATP-binding</keyword>
<keyword id="KW-0963">Cytoplasm</keyword>
<keyword id="KW-0275">Fatty acid biosynthesis</keyword>
<keyword id="KW-0276">Fatty acid metabolism</keyword>
<keyword id="KW-0444">Lipid biosynthesis</keyword>
<keyword id="KW-0443">Lipid metabolism</keyword>
<keyword id="KW-0479">Metal-binding</keyword>
<keyword id="KW-0547">Nucleotide-binding</keyword>
<keyword id="KW-1185">Reference proteome</keyword>
<keyword id="KW-0808">Transferase</keyword>
<keyword id="KW-0862">Zinc</keyword>
<keyword id="KW-0863">Zinc-finger</keyword>
<proteinExistence type="inferred from homology"/>
<dbReference type="EC" id="2.1.3.15" evidence="1"/>
<dbReference type="EMBL" id="CP000082">
    <property type="protein sequence ID" value="AAZ18297.1"/>
    <property type="molecule type" value="Genomic_DNA"/>
</dbReference>
<dbReference type="RefSeq" id="WP_011279733.1">
    <property type="nucleotide sequence ID" value="NC_007204.1"/>
</dbReference>
<dbReference type="SMR" id="Q4FUL1"/>
<dbReference type="STRING" id="259536.Psyc_0434"/>
<dbReference type="KEGG" id="par:Psyc_0434"/>
<dbReference type="eggNOG" id="COG0777">
    <property type="taxonomic scope" value="Bacteria"/>
</dbReference>
<dbReference type="HOGENOM" id="CLU_015486_1_0_6"/>
<dbReference type="UniPathway" id="UPA00655">
    <property type="reaction ID" value="UER00711"/>
</dbReference>
<dbReference type="Proteomes" id="UP000000546">
    <property type="component" value="Chromosome"/>
</dbReference>
<dbReference type="GO" id="GO:0009329">
    <property type="term" value="C:acetate CoA-transferase complex"/>
    <property type="evidence" value="ECO:0007669"/>
    <property type="project" value="TreeGrafter"/>
</dbReference>
<dbReference type="GO" id="GO:0003989">
    <property type="term" value="F:acetyl-CoA carboxylase activity"/>
    <property type="evidence" value="ECO:0007669"/>
    <property type="project" value="InterPro"/>
</dbReference>
<dbReference type="GO" id="GO:0005524">
    <property type="term" value="F:ATP binding"/>
    <property type="evidence" value="ECO:0007669"/>
    <property type="project" value="UniProtKB-KW"/>
</dbReference>
<dbReference type="GO" id="GO:0016743">
    <property type="term" value="F:carboxyl- or carbamoyltransferase activity"/>
    <property type="evidence" value="ECO:0007669"/>
    <property type="project" value="UniProtKB-UniRule"/>
</dbReference>
<dbReference type="GO" id="GO:0008270">
    <property type="term" value="F:zinc ion binding"/>
    <property type="evidence" value="ECO:0007669"/>
    <property type="project" value="UniProtKB-UniRule"/>
</dbReference>
<dbReference type="GO" id="GO:0006633">
    <property type="term" value="P:fatty acid biosynthetic process"/>
    <property type="evidence" value="ECO:0007669"/>
    <property type="project" value="UniProtKB-KW"/>
</dbReference>
<dbReference type="GO" id="GO:2001295">
    <property type="term" value="P:malonyl-CoA biosynthetic process"/>
    <property type="evidence" value="ECO:0007669"/>
    <property type="project" value="UniProtKB-UniRule"/>
</dbReference>
<dbReference type="Gene3D" id="3.90.226.10">
    <property type="entry name" value="2-enoyl-CoA Hydratase, Chain A, domain 1"/>
    <property type="match status" value="1"/>
</dbReference>
<dbReference type="HAMAP" id="MF_01395">
    <property type="entry name" value="AcetylCoA_CT_beta"/>
    <property type="match status" value="1"/>
</dbReference>
<dbReference type="InterPro" id="IPR034733">
    <property type="entry name" value="AcCoA_carboxyl_beta"/>
</dbReference>
<dbReference type="InterPro" id="IPR000438">
    <property type="entry name" value="Acetyl_CoA_COase_Trfase_b_su"/>
</dbReference>
<dbReference type="InterPro" id="IPR029045">
    <property type="entry name" value="ClpP/crotonase-like_dom_sf"/>
</dbReference>
<dbReference type="InterPro" id="IPR011762">
    <property type="entry name" value="COA_CT_N"/>
</dbReference>
<dbReference type="NCBIfam" id="TIGR00515">
    <property type="entry name" value="accD"/>
    <property type="match status" value="1"/>
</dbReference>
<dbReference type="PANTHER" id="PTHR42995">
    <property type="entry name" value="ACETYL-COENZYME A CARBOXYLASE CARBOXYL TRANSFERASE SUBUNIT BETA, CHLOROPLASTIC"/>
    <property type="match status" value="1"/>
</dbReference>
<dbReference type="PANTHER" id="PTHR42995:SF5">
    <property type="entry name" value="ACETYL-COENZYME A CARBOXYLASE CARBOXYL TRANSFERASE SUBUNIT BETA, CHLOROPLASTIC"/>
    <property type="match status" value="1"/>
</dbReference>
<dbReference type="Pfam" id="PF01039">
    <property type="entry name" value="Carboxyl_trans"/>
    <property type="match status" value="1"/>
</dbReference>
<dbReference type="PRINTS" id="PR01070">
    <property type="entry name" value="ACCCTRFRASEB"/>
</dbReference>
<dbReference type="SUPFAM" id="SSF52096">
    <property type="entry name" value="ClpP/crotonase"/>
    <property type="match status" value="1"/>
</dbReference>
<dbReference type="PROSITE" id="PS50980">
    <property type="entry name" value="COA_CT_NTER"/>
    <property type="match status" value="1"/>
</dbReference>
<evidence type="ECO:0000255" key="1">
    <source>
        <dbReference type="HAMAP-Rule" id="MF_01395"/>
    </source>
</evidence>
<evidence type="ECO:0000255" key="2">
    <source>
        <dbReference type="PROSITE-ProRule" id="PRU01136"/>
    </source>
</evidence>
<evidence type="ECO:0000256" key="3">
    <source>
        <dbReference type="SAM" id="MobiDB-lite"/>
    </source>
</evidence>
<accession>Q4FUL1</accession>
<gene>
    <name evidence="1" type="primary">accD</name>
    <name type="ordered locus">Psyc_0434</name>
</gene>
<comment type="function">
    <text evidence="1">Component of the acetyl coenzyme A carboxylase (ACC) complex. Biotin carboxylase (BC) catalyzes the carboxylation of biotin on its carrier protein (BCCP) and then the CO(2) group is transferred by the transcarboxylase to acetyl-CoA to form malonyl-CoA.</text>
</comment>
<comment type="catalytic activity">
    <reaction evidence="1">
        <text>N(6)-carboxybiotinyl-L-lysyl-[protein] + acetyl-CoA = N(6)-biotinyl-L-lysyl-[protein] + malonyl-CoA</text>
        <dbReference type="Rhea" id="RHEA:54728"/>
        <dbReference type="Rhea" id="RHEA-COMP:10505"/>
        <dbReference type="Rhea" id="RHEA-COMP:10506"/>
        <dbReference type="ChEBI" id="CHEBI:57288"/>
        <dbReference type="ChEBI" id="CHEBI:57384"/>
        <dbReference type="ChEBI" id="CHEBI:83144"/>
        <dbReference type="ChEBI" id="CHEBI:83145"/>
        <dbReference type="EC" id="2.1.3.15"/>
    </reaction>
</comment>
<comment type="cofactor">
    <cofactor evidence="1">
        <name>Zn(2+)</name>
        <dbReference type="ChEBI" id="CHEBI:29105"/>
    </cofactor>
    <text evidence="1">Binds 1 zinc ion per subunit.</text>
</comment>
<comment type="pathway">
    <text evidence="1">Lipid metabolism; malonyl-CoA biosynthesis; malonyl-CoA from acetyl-CoA: step 1/1.</text>
</comment>
<comment type="subunit">
    <text evidence="1">Acetyl-CoA carboxylase is a heterohexamer composed of biotin carboxyl carrier protein (AccB), biotin carboxylase (AccC) and two subunits each of ACCase subunit alpha (AccA) and ACCase subunit beta (AccD).</text>
</comment>
<comment type="subcellular location">
    <subcellularLocation>
        <location evidence="1">Cytoplasm</location>
    </subcellularLocation>
</comment>
<comment type="similarity">
    <text evidence="1">Belongs to the AccD/PCCB family.</text>
</comment>
<reference key="1">
    <citation type="journal article" date="2010" name="Appl. Environ. Microbiol.">
        <title>The genome sequence of Psychrobacter arcticus 273-4, a psychroactive Siberian permafrost bacterium, reveals mechanisms for adaptation to low-temperature growth.</title>
        <authorList>
            <person name="Ayala-del-Rio H.L."/>
            <person name="Chain P.S."/>
            <person name="Grzymski J.J."/>
            <person name="Ponder M.A."/>
            <person name="Ivanova N."/>
            <person name="Bergholz P.W."/>
            <person name="Di Bartolo G."/>
            <person name="Hauser L."/>
            <person name="Land M."/>
            <person name="Bakermans C."/>
            <person name="Rodrigues D."/>
            <person name="Klappenbach J."/>
            <person name="Zarka D."/>
            <person name="Larimer F."/>
            <person name="Richardson P."/>
            <person name="Murray A."/>
            <person name="Thomashow M."/>
            <person name="Tiedje J.M."/>
        </authorList>
    </citation>
    <scope>NUCLEOTIDE SEQUENCE [LARGE SCALE GENOMIC DNA]</scope>
    <source>
        <strain>DSM 17307 / VKM B-2377 / 273-4</strain>
    </source>
</reference>
<name>ACCD_PSYA2</name>
<sequence length="317" mass="34977">MANNMTDTMTKFDTNNDSASLQQNGNKAGQSWFERPIPGIKQQLIAQLTAVETEPSTKCSSCHSVITNTALIFNCYVCPHCDHHLPMSARERLNWLLDQVEGELGQEFTAKDPLKFVDSKPYPDRMAEAQDKTKESEALIVLYGKLRNLDIVTCAFDFRFMGGSMGSVVGDRFVQAAEKALADKVPLVCFAASGGARMQEGLLSLMQMARTAAAIERLRIAGIPYVVVLTNPVYGGVTASLAMLGDIHLAEPKAMIGFAGKRVIEQTVRETLEEPFQRAEFLLKHGVVDEVVHRHQMIDTIYRLLAKLCSVPNVDAQ</sequence>